<accession>Q03385</accession>
<accession>Q8R077</accession>
<name>GNDS_MOUSE</name>
<comment type="function">
    <text evidence="2 8">Functions as a guanine nucleotide exchange factor (GEF) activating either RalA or RalB GTPases and plays an important role in intracellular transport. Interacts and acts as an effector molecule for R-Ras, H-Ras, K-Ras, and Rap (PubMed:27773821). During bacterial clearance, recognizes 'Lys-33'-linked polyubiquitinated TRAF3 and subsequently mediates assembly of the exocyst complex (By similarity).</text>
</comment>
<comment type="subunit">
    <text evidence="2 8">Interacts with RIT1 and RIT2 (By similarity). Interacts with OOG1 (PubMed:16580637). Interacts with TRAF3 (By similarity). Interacts with HRAS (PubMed:27773821).</text>
</comment>
<comment type="interaction">
    <interactant intactId="EBI-923705">
        <id>Q03385</id>
    </interactant>
    <interactant intactId="EBI-923698">
        <id>E9Q5G7</id>
        <label>Oog1</label>
    </interactant>
    <organismsDiffer>false</organismsDiffer>
    <experiments>5</experiments>
</comment>
<comment type="subcellular location">
    <subcellularLocation>
        <location evidence="7">Cytoplasm</location>
    </subcellularLocation>
    <subcellularLocation>
        <location evidence="7">Nucleus</location>
    </subcellularLocation>
    <text evidence="7">Localizes mainly in the peripheral region of the cytoplasmic membrane in oocytes and in preimplantation embryos until the 8-cell stage. Between the late 1-cell and the early 2-cell stages, nuclear localization becomes stronger. After the 4-cell stage, not detected in the nucleus.</text>
</comment>
<comment type="developmental stage">
    <text evidence="7">Expressed in the ovarian oocytes from the primary follicle stage to the antral follicle stage (at protein level). Expressed in preimplantation embryos until the early 2-cell stage, decreasing thereafter.</text>
</comment>
<comment type="domain">
    <text evidence="1">The Ras-associating domain interacts with Ras.</text>
</comment>
<comment type="PTM">
    <text evidence="8">Phosphorylation of Tyr-752 by MET blocks HRAS binding.</text>
</comment>
<keyword id="KW-0963">Cytoplasm</keyword>
<keyword id="KW-0344">Guanine-nucleotide releasing factor</keyword>
<keyword id="KW-0539">Nucleus</keyword>
<keyword id="KW-0597">Phosphoprotein</keyword>
<keyword id="KW-1185">Reference proteome</keyword>
<gene>
    <name type="primary">Ralgds</name>
    <name type="synonym">Rgds</name>
</gene>
<proteinExistence type="evidence at protein level"/>
<reference key="1">
    <citation type="journal article" date="1993" name="EMBO J.">
        <title>Characterization of a guanine nucleotide dissociation stimulator for a ras-related GTPase.</title>
        <authorList>
            <person name="Albright C.F."/>
            <person name="Giddings B.W."/>
            <person name="Liu J."/>
            <person name="Vito M."/>
            <person name="Weinberg R.A."/>
        </authorList>
    </citation>
    <scope>NUCLEOTIDE SEQUENCE [MRNA]</scope>
    <source>
        <tissue>Fibroblast</tissue>
    </source>
</reference>
<reference key="2">
    <citation type="journal article" date="2009" name="PLoS Biol.">
        <title>Lineage-specific biology revealed by a finished genome assembly of the mouse.</title>
        <authorList>
            <person name="Church D.M."/>
            <person name="Goodstadt L."/>
            <person name="Hillier L.W."/>
            <person name="Zody M.C."/>
            <person name="Goldstein S."/>
            <person name="She X."/>
            <person name="Bult C.J."/>
            <person name="Agarwala R."/>
            <person name="Cherry J.L."/>
            <person name="DiCuccio M."/>
            <person name="Hlavina W."/>
            <person name="Kapustin Y."/>
            <person name="Meric P."/>
            <person name="Maglott D."/>
            <person name="Birtle Z."/>
            <person name="Marques A.C."/>
            <person name="Graves T."/>
            <person name="Zhou S."/>
            <person name="Teague B."/>
            <person name="Potamousis K."/>
            <person name="Churas C."/>
            <person name="Place M."/>
            <person name="Herschleb J."/>
            <person name="Runnheim R."/>
            <person name="Forrest D."/>
            <person name="Amos-Landgraf J."/>
            <person name="Schwartz D.C."/>
            <person name="Cheng Z."/>
            <person name="Lindblad-Toh K."/>
            <person name="Eichler E.E."/>
            <person name="Ponting C.P."/>
        </authorList>
    </citation>
    <scope>NUCLEOTIDE SEQUENCE [LARGE SCALE GENOMIC DNA]</scope>
    <source>
        <strain>C57BL/6J</strain>
    </source>
</reference>
<reference key="3">
    <citation type="submission" date="2005-07" db="EMBL/GenBank/DDBJ databases">
        <authorList>
            <person name="Mural R.J."/>
            <person name="Adams M.D."/>
            <person name="Myers E.W."/>
            <person name="Smith H.O."/>
            <person name="Venter J.C."/>
        </authorList>
    </citation>
    <scope>NUCLEOTIDE SEQUENCE [LARGE SCALE GENOMIC DNA]</scope>
</reference>
<reference key="4">
    <citation type="journal article" date="2004" name="Genome Res.">
        <title>The status, quality, and expansion of the NIH full-length cDNA project: the Mammalian Gene Collection (MGC).</title>
        <authorList>
            <consortium name="The MGC Project Team"/>
        </authorList>
    </citation>
    <scope>NUCLEOTIDE SEQUENCE [LARGE SCALE MRNA]</scope>
    <source>
        <strain>FVB/N</strain>
        <tissue>Mammary tumor</tissue>
    </source>
</reference>
<reference key="5">
    <citation type="journal article" date="2006" name="Biochem. Biophys. Res. Commun.">
        <title>Oog1, an oocyte-specific protein, interacts with Ras and Ras-signaling proteins during early embryogenesis.</title>
        <authorList>
            <person name="Tsukamoto S."/>
            <person name="Ihara R."/>
            <person name="Aizawa A."/>
            <person name="Kishida S."/>
            <person name="Kikuchi A."/>
            <person name="Imai H."/>
            <person name="Minami N."/>
        </authorList>
    </citation>
    <scope>INTERACTION WITH OOG1</scope>
    <scope>SUBCELLULAR LOCATION</scope>
    <scope>DEVELOPMENTAL STAGE</scope>
</reference>
<reference key="6">
    <citation type="journal article" date="2010" name="Cell">
        <title>A tissue-specific atlas of mouse protein phosphorylation and expression.</title>
        <authorList>
            <person name="Huttlin E.L."/>
            <person name="Jedrychowski M.P."/>
            <person name="Elias J.E."/>
            <person name="Goswami T."/>
            <person name="Rad R."/>
            <person name="Beausoleil S.A."/>
            <person name="Villen J."/>
            <person name="Haas W."/>
            <person name="Sowa M.E."/>
            <person name="Gygi S.P."/>
        </authorList>
    </citation>
    <scope>IDENTIFICATION BY MASS SPECTROMETRY [LARGE SCALE ANALYSIS]</scope>
    <source>
        <tissue>Testis</tissue>
    </source>
</reference>
<reference key="7">
    <citation type="journal article" date="2016" name="Biochem. Biophys. Res. Commun.">
        <title>Tyrosine phosphorylation of RalGDS by c-Met receptor blocks its interaction with Ras.</title>
        <authorList>
            <person name="Wong R."/>
            <person name="Feig L.A."/>
        </authorList>
    </citation>
    <scope>FUNCTION</scope>
    <scope>PHOSPHORYLATION AT TYR-752</scope>
    <scope>INTERACTION WITH HRAS</scope>
</reference>
<dbReference type="EMBL" id="L07924">
    <property type="protein sequence ID" value="AAA37714.1"/>
    <property type="molecule type" value="mRNA"/>
</dbReference>
<dbReference type="EMBL" id="AL772249">
    <property type="status" value="NOT_ANNOTATED_CDS"/>
    <property type="molecule type" value="Genomic_DNA"/>
</dbReference>
<dbReference type="EMBL" id="CH466542">
    <property type="protein sequence ID" value="EDL08385.1"/>
    <property type="molecule type" value="Genomic_DNA"/>
</dbReference>
<dbReference type="EMBL" id="BC027225">
    <property type="protein sequence ID" value="AAH27225.1"/>
    <property type="molecule type" value="mRNA"/>
</dbReference>
<dbReference type="CCDS" id="CCDS15840.1"/>
<dbReference type="PIR" id="S28415">
    <property type="entry name" value="S28415"/>
</dbReference>
<dbReference type="RefSeq" id="NP_033084.2">
    <property type="nucleotide sequence ID" value="NM_009058.3"/>
</dbReference>
<dbReference type="SMR" id="Q03385"/>
<dbReference type="BioGRID" id="202878">
    <property type="interactions" value="2"/>
</dbReference>
<dbReference type="FunCoup" id="Q03385">
    <property type="interactions" value="2525"/>
</dbReference>
<dbReference type="IntAct" id="Q03385">
    <property type="interactions" value="2"/>
</dbReference>
<dbReference type="STRING" id="10090.ENSMUSP00000097812"/>
<dbReference type="GlyGen" id="Q03385">
    <property type="glycosylation" value="1 site"/>
</dbReference>
<dbReference type="iPTMnet" id="Q03385"/>
<dbReference type="PhosphoSitePlus" id="Q03385"/>
<dbReference type="PaxDb" id="10090-ENSMUSP00000097812"/>
<dbReference type="ProteomicsDB" id="267737"/>
<dbReference type="DNASU" id="19730"/>
<dbReference type="Ensembl" id="ENSMUST00000028170.15">
    <property type="protein sequence ID" value="ENSMUSP00000028170.9"/>
    <property type="gene ID" value="ENSMUSG00000026821.17"/>
</dbReference>
<dbReference type="GeneID" id="19730"/>
<dbReference type="KEGG" id="mmu:19730"/>
<dbReference type="UCSC" id="uc008iym.2">
    <property type="organism name" value="mouse"/>
</dbReference>
<dbReference type="AGR" id="MGI:107485"/>
<dbReference type="CTD" id="5900"/>
<dbReference type="MGI" id="MGI:107485">
    <property type="gene designation" value="Ralgds"/>
</dbReference>
<dbReference type="VEuPathDB" id="HostDB:ENSMUSG00000026821"/>
<dbReference type="eggNOG" id="KOG3629">
    <property type="taxonomic scope" value="Eukaryota"/>
</dbReference>
<dbReference type="GeneTree" id="ENSGT00940000153181"/>
<dbReference type="HOGENOM" id="CLU_010252_0_1_1"/>
<dbReference type="InParanoid" id="Q03385"/>
<dbReference type="OMA" id="EHFVAWF"/>
<dbReference type="OrthoDB" id="26687at2759"/>
<dbReference type="Reactome" id="R-MMU-171007">
    <property type="pathway name" value="p38MAPK events"/>
</dbReference>
<dbReference type="Reactome" id="R-MMU-5673001">
    <property type="pathway name" value="RAF/MAP kinase cascade"/>
</dbReference>
<dbReference type="BioGRID-ORCS" id="19730">
    <property type="hits" value="2 hits in 77 CRISPR screens"/>
</dbReference>
<dbReference type="ChiTaRS" id="Ralgds">
    <property type="organism name" value="mouse"/>
</dbReference>
<dbReference type="PRO" id="PR:Q03385"/>
<dbReference type="Proteomes" id="UP000000589">
    <property type="component" value="Chromosome 2"/>
</dbReference>
<dbReference type="RNAct" id="Q03385">
    <property type="molecule type" value="protein"/>
</dbReference>
<dbReference type="Bgee" id="ENSMUSG00000026821">
    <property type="expression patterns" value="Expressed in thoracic mammary gland and 240 other cell types or tissues"/>
</dbReference>
<dbReference type="ExpressionAtlas" id="Q03385">
    <property type="expression patterns" value="baseline and differential"/>
</dbReference>
<dbReference type="GO" id="GO:0005737">
    <property type="term" value="C:cytoplasm"/>
    <property type="evidence" value="ECO:0007669"/>
    <property type="project" value="UniProtKB-SubCell"/>
</dbReference>
<dbReference type="GO" id="GO:0005634">
    <property type="term" value="C:nucleus"/>
    <property type="evidence" value="ECO:0007669"/>
    <property type="project" value="UniProtKB-SubCell"/>
</dbReference>
<dbReference type="GO" id="GO:0005085">
    <property type="term" value="F:guanyl-nucleotide exchange factor activity"/>
    <property type="evidence" value="ECO:0007669"/>
    <property type="project" value="UniProtKB-KW"/>
</dbReference>
<dbReference type="GO" id="GO:0007264">
    <property type="term" value="P:small GTPase-mediated signal transduction"/>
    <property type="evidence" value="ECO:0007669"/>
    <property type="project" value="InterPro"/>
</dbReference>
<dbReference type="CDD" id="cd17209">
    <property type="entry name" value="RA_RalGDS"/>
    <property type="match status" value="1"/>
</dbReference>
<dbReference type="CDD" id="cd00155">
    <property type="entry name" value="RasGEF"/>
    <property type="match status" value="1"/>
</dbReference>
<dbReference type="CDD" id="cd06224">
    <property type="entry name" value="REM"/>
    <property type="match status" value="1"/>
</dbReference>
<dbReference type="FunFam" id="1.10.840.10:FF:000005">
    <property type="entry name" value="Ral guanine nucleotide dissociation stimulator isoform 1"/>
    <property type="match status" value="1"/>
</dbReference>
<dbReference type="FunFam" id="1.20.870.10:FF:000003">
    <property type="entry name" value="Ral guanine nucleotide dissociation stimulator isoform 1"/>
    <property type="match status" value="1"/>
</dbReference>
<dbReference type="FunFam" id="3.10.20.90:FF:000042">
    <property type="entry name" value="Ral guanine nucleotide dissociation stimulator isoform 1"/>
    <property type="match status" value="1"/>
</dbReference>
<dbReference type="Gene3D" id="3.10.20.90">
    <property type="entry name" value="Phosphatidylinositol 3-kinase Catalytic Subunit, Chain A, domain 1"/>
    <property type="match status" value="1"/>
</dbReference>
<dbReference type="Gene3D" id="1.10.840.10">
    <property type="entry name" value="Ras guanine-nucleotide exchange factors catalytic domain"/>
    <property type="match status" value="1"/>
</dbReference>
<dbReference type="Gene3D" id="1.20.870.10">
    <property type="entry name" value="Son of sevenless (SoS) protein Chain: S domain 1"/>
    <property type="match status" value="1"/>
</dbReference>
<dbReference type="InterPro" id="IPR000159">
    <property type="entry name" value="RA_dom"/>
</dbReference>
<dbReference type="InterPro" id="IPR015758">
    <property type="entry name" value="RalGDS_RA"/>
</dbReference>
<dbReference type="InterPro" id="IPR008937">
    <property type="entry name" value="Ras-like_GEF"/>
</dbReference>
<dbReference type="InterPro" id="IPR000651">
    <property type="entry name" value="Ras-like_Gua-exchang_fac_N"/>
</dbReference>
<dbReference type="InterPro" id="IPR019804">
    <property type="entry name" value="Ras_G-nucl-exch_fac_CS"/>
</dbReference>
<dbReference type="InterPro" id="IPR023578">
    <property type="entry name" value="Ras_GEF_dom_sf"/>
</dbReference>
<dbReference type="InterPro" id="IPR001895">
    <property type="entry name" value="RASGEF_cat_dom"/>
</dbReference>
<dbReference type="InterPro" id="IPR036964">
    <property type="entry name" value="RASGEF_cat_dom_sf"/>
</dbReference>
<dbReference type="InterPro" id="IPR029071">
    <property type="entry name" value="Ubiquitin-like_domsf"/>
</dbReference>
<dbReference type="PANTHER" id="PTHR23113">
    <property type="entry name" value="GUANINE NUCLEOTIDE EXCHANGE FACTOR"/>
    <property type="match status" value="1"/>
</dbReference>
<dbReference type="PANTHER" id="PTHR23113:SF35">
    <property type="entry name" value="RAL GUANINE NUCLEOTIDE DISSOCIATION STIMULATOR"/>
    <property type="match status" value="1"/>
</dbReference>
<dbReference type="Pfam" id="PF00788">
    <property type="entry name" value="RA"/>
    <property type="match status" value="1"/>
</dbReference>
<dbReference type="Pfam" id="PF00617">
    <property type="entry name" value="RasGEF"/>
    <property type="match status" value="1"/>
</dbReference>
<dbReference type="Pfam" id="PF00618">
    <property type="entry name" value="RasGEF_N"/>
    <property type="match status" value="1"/>
</dbReference>
<dbReference type="SMART" id="SM00314">
    <property type="entry name" value="RA"/>
    <property type="match status" value="1"/>
</dbReference>
<dbReference type="SMART" id="SM00147">
    <property type="entry name" value="RasGEF"/>
    <property type="match status" value="1"/>
</dbReference>
<dbReference type="SMART" id="SM00229">
    <property type="entry name" value="RasGEFN"/>
    <property type="match status" value="1"/>
</dbReference>
<dbReference type="SUPFAM" id="SSF48366">
    <property type="entry name" value="Ras GEF"/>
    <property type="match status" value="1"/>
</dbReference>
<dbReference type="SUPFAM" id="SSF54236">
    <property type="entry name" value="Ubiquitin-like"/>
    <property type="match status" value="1"/>
</dbReference>
<dbReference type="PROSITE" id="PS50200">
    <property type="entry name" value="RA"/>
    <property type="match status" value="1"/>
</dbReference>
<dbReference type="PROSITE" id="PS00720">
    <property type="entry name" value="RASGEF"/>
    <property type="match status" value="1"/>
</dbReference>
<dbReference type="PROSITE" id="PS50009">
    <property type="entry name" value="RASGEF_CAT"/>
    <property type="match status" value="1"/>
</dbReference>
<dbReference type="PROSITE" id="PS50212">
    <property type="entry name" value="RASGEF_NTER"/>
    <property type="match status" value="1"/>
</dbReference>
<evidence type="ECO:0000250" key="1"/>
<evidence type="ECO:0000250" key="2">
    <source>
        <dbReference type="UniProtKB" id="Q12967"/>
    </source>
</evidence>
<evidence type="ECO:0000255" key="3">
    <source>
        <dbReference type="PROSITE-ProRule" id="PRU00135"/>
    </source>
</evidence>
<evidence type="ECO:0000255" key="4">
    <source>
        <dbReference type="PROSITE-ProRule" id="PRU00166"/>
    </source>
</evidence>
<evidence type="ECO:0000255" key="5">
    <source>
        <dbReference type="PROSITE-ProRule" id="PRU00168"/>
    </source>
</evidence>
<evidence type="ECO:0000256" key="6">
    <source>
        <dbReference type="SAM" id="MobiDB-lite"/>
    </source>
</evidence>
<evidence type="ECO:0000269" key="7">
    <source>
    </source>
</evidence>
<evidence type="ECO:0000269" key="8">
    <source>
    </source>
</evidence>
<evidence type="ECO:0000305" key="9"/>
<protein>
    <recommendedName>
        <fullName>Ral guanine nucleotide dissociation stimulator</fullName>
        <shortName>RalGDS</shortName>
    </recommendedName>
    <alternativeName>
        <fullName>Ral guanine nucleotide exchange factor</fullName>
        <shortName>RalGEF</shortName>
    </alternativeName>
</protein>
<feature type="chain" id="PRO_0000068878" description="Ral guanine nucleotide dissociation stimulator">
    <location>
        <begin position="1"/>
        <end position="852"/>
    </location>
</feature>
<feature type="domain" description="N-terminal Ras-GEF" evidence="3">
    <location>
        <begin position="57"/>
        <end position="194"/>
    </location>
</feature>
<feature type="domain" description="Ras-GEF" evidence="5">
    <location>
        <begin position="324"/>
        <end position="586"/>
    </location>
</feature>
<feature type="domain" description="Ras-associating" evidence="4">
    <location>
        <begin position="736"/>
        <end position="823"/>
    </location>
</feature>
<feature type="region of interest" description="Disordered" evidence="6">
    <location>
        <begin position="606"/>
        <end position="627"/>
    </location>
</feature>
<feature type="region of interest" description="Disordered" evidence="6">
    <location>
        <begin position="665"/>
        <end position="711"/>
    </location>
</feature>
<feature type="compositionally biased region" description="Low complexity" evidence="6">
    <location>
        <begin position="613"/>
        <end position="624"/>
    </location>
</feature>
<feature type="compositionally biased region" description="Low complexity" evidence="6">
    <location>
        <begin position="683"/>
        <end position="710"/>
    </location>
</feature>
<feature type="modified residue" description="Phosphotyrosine" evidence="2">
    <location>
        <position position="752"/>
    </location>
</feature>
<feature type="sequence conflict" description="In Ref. 1; AAA37714." evidence="9" ref="1">
    <original>D</original>
    <variation>A</variation>
    <location>
        <position position="357"/>
    </location>
</feature>
<feature type="sequence conflict" description="In Ref. 1; AAA37714." evidence="9" ref="1">
    <original>S</original>
    <variation>T</variation>
    <location>
        <position position="691"/>
    </location>
</feature>
<organism>
    <name type="scientific">Mus musculus</name>
    <name type="common">Mouse</name>
    <dbReference type="NCBI Taxonomy" id="10090"/>
    <lineage>
        <taxon>Eukaryota</taxon>
        <taxon>Metazoa</taxon>
        <taxon>Chordata</taxon>
        <taxon>Craniata</taxon>
        <taxon>Vertebrata</taxon>
        <taxon>Euteleostomi</taxon>
        <taxon>Mammalia</taxon>
        <taxon>Eutheria</taxon>
        <taxon>Euarchontoglires</taxon>
        <taxon>Glires</taxon>
        <taxon>Rodentia</taxon>
        <taxon>Myomorpha</taxon>
        <taxon>Muroidea</taxon>
        <taxon>Muridae</taxon>
        <taxon>Murinae</taxon>
        <taxon>Mus</taxon>
        <taxon>Mus</taxon>
    </lineage>
</organism>
<sequence>MMVDCQSSTQEIGEELINGVIYSISLRKVQLHQGATKGQRWLGCENESALNLYETCKVRTVKAGTLEKLVEHLVPAFQGSDLSYVTVFLCTYRAFTTTQQVLDLLFKRYGRCDALTASSRYGCILPYSSEDGGPQDQLKNAISSILGTWLDQYSEDFCQPPDFPCLKQLVAYVQLNMPGSDLERRAHLLLAQLEDLEPSEAESEALSPAPVLSLKPASQLEPALLLTPSQVVTSTPVREPAAAPVPVLASSPVVAPAPELEPVPEPPQEPEPSLALAPELEPAVSQSLELESAPVPTPALEPSWSLPEATENGLTEKPHLLLFPPDLVAEQFTLMDAELFKKVVPYHCLGSIWSQRDKKGKEHLAPTIRATVAQFNNVANCVITTCLGDQSMKAPDRARVVEHWIEVARECRALKNFSSLYAILSALQSNAIHRLKKTWEEVSRDSFRVFQKLSEIFSDENNYSLSRELLIKEGTSKFATLEMNPRRAQRRQKETGVIQGTVPYLGTFLTDLVMLDTAMKDYLYGRLINFEKRRKEFEVIAQIKLLQSACNNYSIAPEEHFGTWFRAMERLSEAESYTLSCELEPPSESASNTLRSKKSTAIVKRWSDRQAPSTELSTSSSAHSKSCDQLRCSPYLGSGDITDALSVHSAGSSSSDVEEINMSFVPESPDGQEKKFWESASQSSPETSGISSASSSTSSSSASTTPVSTTRTHKRSVSGVCSYSSSLPLYNQQVGDCCIIRVSLDVDNGNMYKSILVTSQDKAPTVIRKAMDKHNLDEDEPEDYELVQIISEDHKLKIPENANVFYAMNSTANYDFILKKRTFTKGAKVKHGASSTLPRMKQKGLRIAKGIF</sequence>